<sequence>MPCQDTVSLSIQHTSVYVQHSCCVSTSTSASTSATALGLGCLACGIVGVLVVAGGLCCLINGRCPSCRRLALRSRSWKSPPASLCTNQPLAFNLRDLTRSDIRCTSDPRSVELLSDVHSVVSHRERPPAYDSLDFEPTEYTPEAFQ</sequence>
<gene>
    <name type="primary">S7</name>
</gene>
<dbReference type="EMBL" id="AF403404">
    <property type="protein sequence ID" value="AAM92750.1"/>
    <property type="molecule type" value="Genomic_RNA"/>
</dbReference>
<dbReference type="RefSeq" id="NP_938066.1">
    <property type="nucleotide sequence ID" value="NC_005172.1"/>
</dbReference>
<dbReference type="TCDB" id="1.G.7.2.2">
    <property type="family name" value="the reovirus fast fusion protein (r-fast) family"/>
</dbReference>
<dbReference type="KEGG" id="vg:2648335"/>
<dbReference type="Proteomes" id="UP000006713">
    <property type="component" value="Genome"/>
</dbReference>
<dbReference type="GO" id="GO:0033644">
    <property type="term" value="C:host cell membrane"/>
    <property type="evidence" value="ECO:0007669"/>
    <property type="project" value="UniProtKB-SubCell"/>
</dbReference>
<dbReference type="GO" id="GO:0016020">
    <property type="term" value="C:membrane"/>
    <property type="evidence" value="ECO:0007669"/>
    <property type="project" value="UniProtKB-KW"/>
</dbReference>
<reference key="1">
    <citation type="journal article" date="2002" name="J. Gen. Virol.">
        <title>Common evolutionary origin of aquareoviruses and orthoreoviruses revealed by genome characterization of Golden shiner reovirus, Grass carp reovirus, Striped bass reovirus and golden ide reovirus (genus Aquareovirus, family Reoviridae).</title>
        <authorList>
            <person name="Attoui H."/>
            <person name="Fang Q."/>
            <person name="Mohd Jaafar F."/>
            <person name="Cantaloube J.F."/>
            <person name="Biagini P."/>
            <person name="de Micco P."/>
            <person name="de Lamballerie X."/>
        </authorList>
    </citation>
    <scope>NUCLEOTIDE SEQUENCE [GENOMIC RNA]</scope>
</reference>
<accession>Q8JU56</accession>
<keyword id="KW-1043">Host membrane</keyword>
<keyword id="KW-0472">Membrane</keyword>
<keyword id="KW-1185">Reference proteome</keyword>
<keyword id="KW-0812">Transmembrane</keyword>
<keyword id="KW-1133">Transmembrane helix</keyword>
<comment type="subcellular location">
    <subcellularLocation>
        <location evidence="2">Host membrane</location>
        <topology evidence="2">Single-pass membrane protein</topology>
    </subcellularLocation>
</comment>
<comment type="similarity">
    <text evidence="2">Belongs to the aquareoviridae NS5 protein family.</text>
</comment>
<name>VNS5_AQRVC</name>
<protein>
    <recommendedName>
        <fullName>Non-structural protein 5</fullName>
        <shortName>NS5</shortName>
    </recommendedName>
</protein>
<organism>
    <name type="scientific">Aquareovirus C (isolate Golden shiner/USA/GSRV/1977)</name>
    <name type="common">AQRV-C</name>
    <dbReference type="NCBI Taxonomy" id="185783"/>
    <lineage>
        <taxon>Viruses</taxon>
        <taxon>Riboviria</taxon>
        <taxon>Orthornavirae</taxon>
        <taxon>Duplornaviricota</taxon>
        <taxon>Resentoviricetes</taxon>
        <taxon>Reovirales</taxon>
        <taxon>Spinareoviridae</taxon>
        <taxon>Aquareovirus</taxon>
        <taxon>Aquareovirus ctenopharyngodontis</taxon>
    </lineage>
</organism>
<evidence type="ECO:0000255" key="1"/>
<evidence type="ECO:0000305" key="2"/>
<organismHost>
    <name type="scientific">Notemigonus crysoleucas</name>
    <name type="common">Golden shiner</name>
    <name type="synonym">Cyprinus crysoleucas</name>
    <dbReference type="NCBI Taxonomy" id="28800"/>
</organismHost>
<organismHost>
    <name type="scientific">Pimephales promelas</name>
    <name type="common">Fathead minnow</name>
    <dbReference type="NCBI Taxonomy" id="90988"/>
</organismHost>
<proteinExistence type="inferred from homology"/>
<feature type="chain" id="PRO_0000404182" description="Non-structural protein 5">
    <location>
        <begin position="1"/>
        <end position="146"/>
    </location>
</feature>
<feature type="transmembrane region" description="Helical" evidence="1">
    <location>
        <begin position="36"/>
        <end position="56"/>
    </location>
</feature>